<organism>
    <name type="scientific">Mannheimia succiniciproducens (strain KCTC 0769BP / MBEL55E)</name>
    <dbReference type="NCBI Taxonomy" id="221988"/>
    <lineage>
        <taxon>Bacteria</taxon>
        <taxon>Pseudomonadati</taxon>
        <taxon>Pseudomonadota</taxon>
        <taxon>Gammaproteobacteria</taxon>
        <taxon>Pasteurellales</taxon>
        <taxon>Pasteurellaceae</taxon>
        <taxon>Basfia</taxon>
    </lineage>
</organism>
<sequence length="354" mass="38902">MFKIASSPHSHSGKLTARIMLWVILAMLPAIFAQLYYFGFGVLFQITIAVVFALCLEFLVTILRKKPKLFYISDFSVTLTALILAVAIPPYAPYWIILIGIFCAVILGKHVYGGLGQNPFNPAMVGYVVLLVSFPMQMTTWLAPVQLLHEPPTFIDAYHLIFSGGTTDGFSLHQLTASIDGMSSATPLDAVKTGLKANRGLAEINRSPLFTQSSLAGLGWFQVNLAFLLGGLFLVWKRIIHWQIPTALLITVCLFSLCSWLFSDNMPSPLWQLFSGATMFCAFFIATDPVTASITPKGKLVFGVLVGLLLCLIRFYGGYPDGAAFAILLANICVPLIDQYTRPRVTGYDLRGKN</sequence>
<dbReference type="EC" id="7.-.-.-" evidence="1"/>
<dbReference type="EMBL" id="AE016827">
    <property type="protein sequence ID" value="AAU37526.1"/>
    <property type="molecule type" value="Genomic_DNA"/>
</dbReference>
<dbReference type="RefSeq" id="WP_011200096.1">
    <property type="nucleotide sequence ID" value="NC_006300.1"/>
</dbReference>
<dbReference type="SMR" id="Q65U34"/>
<dbReference type="STRING" id="221988.MS0919"/>
<dbReference type="KEGG" id="msu:MS0919"/>
<dbReference type="eggNOG" id="COG4658">
    <property type="taxonomic scope" value="Bacteria"/>
</dbReference>
<dbReference type="HOGENOM" id="CLU_042020_0_0_6"/>
<dbReference type="OrthoDB" id="9776359at2"/>
<dbReference type="Proteomes" id="UP000000607">
    <property type="component" value="Chromosome"/>
</dbReference>
<dbReference type="GO" id="GO:0005886">
    <property type="term" value="C:plasma membrane"/>
    <property type="evidence" value="ECO:0007669"/>
    <property type="project" value="UniProtKB-SubCell"/>
</dbReference>
<dbReference type="GO" id="GO:0022900">
    <property type="term" value="P:electron transport chain"/>
    <property type="evidence" value="ECO:0007669"/>
    <property type="project" value="UniProtKB-UniRule"/>
</dbReference>
<dbReference type="GO" id="GO:0055085">
    <property type="term" value="P:transmembrane transport"/>
    <property type="evidence" value="ECO:0007669"/>
    <property type="project" value="InterPro"/>
</dbReference>
<dbReference type="HAMAP" id="MF_00462">
    <property type="entry name" value="RsxD_RnfD"/>
    <property type="match status" value="1"/>
</dbReference>
<dbReference type="InterPro" id="IPR004338">
    <property type="entry name" value="NqrB/RnfD"/>
</dbReference>
<dbReference type="InterPro" id="IPR011303">
    <property type="entry name" value="RnfD_bac"/>
</dbReference>
<dbReference type="NCBIfam" id="NF002011">
    <property type="entry name" value="PRK00816.1"/>
    <property type="match status" value="1"/>
</dbReference>
<dbReference type="NCBIfam" id="TIGR01946">
    <property type="entry name" value="rnfD"/>
    <property type="match status" value="1"/>
</dbReference>
<dbReference type="PANTHER" id="PTHR30578">
    <property type="entry name" value="ELECTRON TRANSPORT COMPLEX PROTEIN RNFD"/>
    <property type="match status" value="1"/>
</dbReference>
<dbReference type="PANTHER" id="PTHR30578:SF0">
    <property type="entry name" value="ION-TRANSLOCATING OXIDOREDUCTASE COMPLEX SUBUNIT D"/>
    <property type="match status" value="1"/>
</dbReference>
<dbReference type="Pfam" id="PF03116">
    <property type="entry name" value="NQR2_RnfD_RnfE"/>
    <property type="match status" value="1"/>
</dbReference>
<accession>Q65U34</accession>
<comment type="function">
    <text evidence="1">Part of a membrane-bound complex that couples electron transfer with translocation of ions across the membrane.</text>
</comment>
<comment type="cofactor">
    <cofactor evidence="1">
        <name>FMN</name>
        <dbReference type="ChEBI" id="CHEBI:58210"/>
    </cofactor>
</comment>
<comment type="subunit">
    <text evidence="1">The complex is composed of six subunits: RnfA, RnfB, RnfC, RnfD, RnfE and RnfG.</text>
</comment>
<comment type="subcellular location">
    <subcellularLocation>
        <location evidence="1">Cell inner membrane</location>
        <topology evidence="1">Multi-pass membrane protein</topology>
    </subcellularLocation>
</comment>
<comment type="similarity">
    <text evidence="1">Belongs to the NqrB/RnfD family.</text>
</comment>
<keyword id="KW-0997">Cell inner membrane</keyword>
<keyword id="KW-1003">Cell membrane</keyword>
<keyword id="KW-0249">Electron transport</keyword>
<keyword id="KW-0285">Flavoprotein</keyword>
<keyword id="KW-0288">FMN</keyword>
<keyword id="KW-0472">Membrane</keyword>
<keyword id="KW-0597">Phosphoprotein</keyword>
<keyword id="KW-1278">Translocase</keyword>
<keyword id="KW-0812">Transmembrane</keyword>
<keyword id="KW-1133">Transmembrane helix</keyword>
<keyword id="KW-0813">Transport</keyword>
<gene>
    <name evidence="1" type="primary">rnfD</name>
    <name type="ordered locus">MS0919</name>
</gene>
<feature type="chain" id="PRO_0000298233" description="Ion-translocating oxidoreductase complex subunit D">
    <location>
        <begin position="1"/>
        <end position="354"/>
    </location>
</feature>
<feature type="transmembrane region" description="Helical" evidence="1">
    <location>
        <begin position="19"/>
        <end position="39"/>
    </location>
</feature>
<feature type="transmembrane region" description="Helical" evidence="1">
    <location>
        <begin position="40"/>
        <end position="60"/>
    </location>
</feature>
<feature type="transmembrane region" description="Helical" evidence="1">
    <location>
        <begin position="70"/>
        <end position="89"/>
    </location>
</feature>
<feature type="transmembrane region" description="Helical" evidence="1">
    <location>
        <begin position="94"/>
        <end position="116"/>
    </location>
</feature>
<feature type="transmembrane region" description="Helical" evidence="1">
    <location>
        <begin position="123"/>
        <end position="143"/>
    </location>
</feature>
<feature type="transmembrane region" description="Helical" evidence="1">
    <location>
        <begin position="215"/>
        <end position="235"/>
    </location>
</feature>
<feature type="transmembrane region" description="Helical" evidence="1">
    <location>
        <begin position="242"/>
        <end position="262"/>
    </location>
</feature>
<feature type="transmembrane region" description="Helical" evidence="1">
    <location>
        <begin position="266"/>
        <end position="286"/>
    </location>
</feature>
<feature type="transmembrane region" description="Helical" evidence="1">
    <location>
        <begin position="300"/>
        <end position="320"/>
    </location>
</feature>
<feature type="transmembrane region" description="Helical" evidence="1">
    <location>
        <begin position="321"/>
        <end position="341"/>
    </location>
</feature>
<feature type="modified residue" description="FMN phosphoryl threonine" evidence="1">
    <location>
        <position position="186"/>
    </location>
</feature>
<proteinExistence type="inferred from homology"/>
<name>RNFD_MANSM</name>
<reference key="1">
    <citation type="journal article" date="2004" name="Nat. Biotechnol.">
        <title>The genome sequence of the capnophilic rumen bacterium Mannheimia succiniciproducens.</title>
        <authorList>
            <person name="Hong S.H."/>
            <person name="Kim J.S."/>
            <person name="Lee S.Y."/>
            <person name="In Y.H."/>
            <person name="Choi S.S."/>
            <person name="Rih J.-K."/>
            <person name="Kim C.H."/>
            <person name="Jeong H."/>
            <person name="Hur C.G."/>
            <person name="Kim J.J."/>
        </authorList>
    </citation>
    <scope>NUCLEOTIDE SEQUENCE [LARGE SCALE GENOMIC DNA]</scope>
    <source>
        <strain>KCTC 0769BP / MBEL55E</strain>
    </source>
</reference>
<evidence type="ECO:0000255" key="1">
    <source>
        <dbReference type="HAMAP-Rule" id="MF_00462"/>
    </source>
</evidence>
<protein>
    <recommendedName>
        <fullName evidence="1">Ion-translocating oxidoreductase complex subunit D</fullName>
        <ecNumber evidence="1">7.-.-.-</ecNumber>
    </recommendedName>
    <alternativeName>
        <fullName evidence="1">Rnf electron transport complex subunit D</fullName>
    </alternativeName>
</protein>